<organism>
    <name type="scientific">Francisella tularensis subsp. tularensis (strain SCHU S4 / Schu 4)</name>
    <dbReference type="NCBI Taxonomy" id="177416"/>
    <lineage>
        <taxon>Bacteria</taxon>
        <taxon>Pseudomonadati</taxon>
        <taxon>Pseudomonadota</taxon>
        <taxon>Gammaproteobacteria</taxon>
        <taxon>Thiotrichales</taxon>
        <taxon>Francisellaceae</taxon>
        <taxon>Francisella</taxon>
    </lineage>
</organism>
<protein>
    <recommendedName>
        <fullName evidence="1">Glutamine--fructose-6-phosphate aminotransferase [isomerizing]</fullName>
        <ecNumber evidence="1">2.6.1.16</ecNumber>
    </recommendedName>
    <alternativeName>
        <fullName evidence="1">D-fructose-6-phosphate amidotransferase</fullName>
    </alternativeName>
    <alternativeName>
        <fullName evidence="1">GFAT</fullName>
    </alternativeName>
    <alternativeName>
        <fullName evidence="1">Glucosamine-6-phosphate synthase</fullName>
    </alternativeName>
    <alternativeName>
        <fullName evidence="1">Hexosephosphate aminotransferase</fullName>
    </alternativeName>
    <alternativeName>
        <fullName evidence="1">L-glutamine--D-fructose-6-phosphate amidotransferase</fullName>
    </alternativeName>
</protein>
<keyword id="KW-0002">3D-structure</keyword>
<keyword id="KW-0032">Aminotransferase</keyword>
<keyword id="KW-0963">Cytoplasm</keyword>
<keyword id="KW-0315">Glutamine amidotransferase</keyword>
<keyword id="KW-1185">Reference proteome</keyword>
<keyword id="KW-0677">Repeat</keyword>
<keyword id="KW-0808">Transferase</keyword>
<dbReference type="EC" id="2.6.1.16" evidence="1"/>
<dbReference type="EMBL" id="AJ749949">
    <property type="protein sequence ID" value="CAG45021.1"/>
    <property type="molecule type" value="Genomic_DNA"/>
</dbReference>
<dbReference type="RefSeq" id="WP_003020072.1">
    <property type="nucleotide sequence ID" value="NZ_CP010290.1"/>
</dbReference>
<dbReference type="RefSeq" id="YP_169433.1">
    <property type="nucleotide sequence ID" value="NC_006570.2"/>
</dbReference>
<dbReference type="PDB" id="3TBF">
    <property type="method" value="X-ray"/>
    <property type="resolution" value="2.28 A"/>
    <property type="chains" value="A/B/C/D/E/F/G/H=241-612"/>
</dbReference>
<dbReference type="PDBsum" id="3TBF"/>
<dbReference type="SMR" id="Q5NHQ9"/>
<dbReference type="IntAct" id="Q5NHQ9">
    <property type="interactions" value="2"/>
</dbReference>
<dbReference type="STRING" id="177416.FTT_0388"/>
<dbReference type="DNASU" id="3192352"/>
<dbReference type="EnsemblBacteria" id="CAG45021">
    <property type="protein sequence ID" value="CAG45021"/>
    <property type="gene ID" value="FTT_0388"/>
</dbReference>
<dbReference type="KEGG" id="ftu:FTT_0388"/>
<dbReference type="eggNOG" id="COG0449">
    <property type="taxonomic scope" value="Bacteria"/>
</dbReference>
<dbReference type="OrthoDB" id="9761808at2"/>
<dbReference type="EvolutionaryTrace" id="Q5NHQ9"/>
<dbReference type="Proteomes" id="UP000001174">
    <property type="component" value="Chromosome"/>
</dbReference>
<dbReference type="GO" id="GO:0005829">
    <property type="term" value="C:cytosol"/>
    <property type="evidence" value="ECO:0007669"/>
    <property type="project" value="TreeGrafter"/>
</dbReference>
<dbReference type="GO" id="GO:0097367">
    <property type="term" value="F:carbohydrate derivative binding"/>
    <property type="evidence" value="ECO:0007669"/>
    <property type="project" value="InterPro"/>
</dbReference>
<dbReference type="GO" id="GO:0004360">
    <property type="term" value="F:glutamine-fructose-6-phosphate transaminase (isomerizing) activity"/>
    <property type="evidence" value="ECO:0007669"/>
    <property type="project" value="UniProtKB-UniRule"/>
</dbReference>
<dbReference type="GO" id="GO:0005975">
    <property type="term" value="P:carbohydrate metabolic process"/>
    <property type="evidence" value="ECO:0007669"/>
    <property type="project" value="UniProtKB-UniRule"/>
</dbReference>
<dbReference type="GO" id="GO:0006002">
    <property type="term" value="P:fructose 6-phosphate metabolic process"/>
    <property type="evidence" value="ECO:0007669"/>
    <property type="project" value="TreeGrafter"/>
</dbReference>
<dbReference type="GO" id="GO:0006487">
    <property type="term" value="P:protein N-linked glycosylation"/>
    <property type="evidence" value="ECO:0007669"/>
    <property type="project" value="TreeGrafter"/>
</dbReference>
<dbReference type="GO" id="GO:0006047">
    <property type="term" value="P:UDP-N-acetylglucosamine metabolic process"/>
    <property type="evidence" value="ECO:0007669"/>
    <property type="project" value="TreeGrafter"/>
</dbReference>
<dbReference type="CDD" id="cd00714">
    <property type="entry name" value="GFAT"/>
    <property type="match status" value="1"/>
</dbReference>
<dbReference type="CDD" id="cd05008">
    <property type="entry name" value="SIS_GlmS_GlmD_1"/>
    <property type="match status" value="1"/>
</dbReference>
<dbReference type="CDD" id="cd05009">
    <property type="entry name" value="SIS_GlmS_GlmD_2"/>
    <property type="match status" value="1"/>
</dbReference>
<dbReference type="FunFam" id="3.40.50.10490:FF:000001">
    <property type="entry name" value="Glutamine--fructose-6-phosphate aminotransferase [isomerizing]"/>
    <property type="match status" value="1"/>
</dbReference>
<dbReference type="FunFam" id="3.60.20.10:FF:000006">
    <property type="entry name" value="Glutamine--fructose-6-phosphate aminotransferase [isomerizing]"/>
    <property type="match status" value="1"/>
</dbReference>
<dbReference type="Gene3D" id="3.40.50.10490">
    <property type="entry name" value="Glucose-6-phosphate isomerase like protein, domain 1"/>
    <property type="match status" value="2"/>
</dbReference>
<dbReference type="Gene3D" id="3.60.20.10">
    <property type="entry name" value="Glutamine Phosphoribosylpyrophosphate, subunit 1, domain 1"/>
    <property type="match status" value="1"/>
</dbReference>
<dbReference type="HAMAP" id="MF_00164">
    <property type="entry name" value="GlmS"/>
    <property type="match status" value="1"/>
</dbReference>
<dbReference type="InterPro" id="IPR017932">
    <property type="entry name" value="GATase_2_dom"/>
</dbReference>
<dbReference type="InterPro" id="IPR005855">
    <property type="entry name" value="GFAT"/>
</dbReference>
<dbReference type="InterPro" id="IPR047084">
    <property type="entry name" value="GFAT_N"/>
</dbReference>
<dbReference type="InterPro" id="IPR035466">
    <property type="entry name" value="GlmS/AgaS_SIS"/>
</dbReference>
<dbReference type="InterPro" id="IPR035490">
    <property type="entry name" value="GlmS/FrlB_SIS"/>
</dbReference>
<dbReference type="InterPro" id="IPR029055">
    <property type="entry name" value="Ntn_hydrolases_N"/>
</dbReference>
<dbReference type="InterPro" id="IPR001347">
    <property type="entry name" value="SIS_dom"/>
</dbReference>
<dbReference type="InterPro" id="IPR046348">
    <property type="entry name" value="SIS_dom_sf"/>
</dbReference>
<dbReference type="NCBIfam" id="TIGR01135">
    <property type="entry name" value="glmS"/>
    <property type="match status" value="1"/>
</dbReference>
<dbReference type="NCBIfam" id="NF001484">
    <property type="entry name" value="PRK00331.1"/>
    <property type="match status" value="1"/>
</dbReference>
<dbReference type="PANTHER" id="PTHR10937">
    <property type="entry name" value="GLUCOSAMINE--FRUCTOSE-6-PHOSPHATE AMINOTRANSFERASE, ISOMERIZING"/>
    <property type="match status" value="1"/>
</dbReference>
<dbReference type="PANTHER" id="PTHR10937:SF0">
    <property type="entry name" value="GLUTAMINE--FRUCTOSE-6-PHOSPHATE TRANSAMINASE (ISOMERIZING)"/>
    <property type="match status" value="1"/>
</dbReference>
<dbReference type="Pfam" id="PF13522">
    <property type="entry name" value="GATase_6"/>
    <property type="match status" value="1"/>
</dbReference>
<dbReference type="Pfam" id="PF01380">
    <property type="entry name" value="SIS"/>
    <property type="match status" value="2"/>
</dbReference>
<dbReference type="SUPFAM" id="SSF56235">
    <property type="entry name" value="N-terminal nucleophile aminohydrolases (Ntn hydrolases)"/>
    <property type="match status" value="1"/>
</dbReference>
<dbReference type="SUPFAM" id="SSF53697">
    <property type="entry name" value="SIS domain"/>
    <property type="match status" value="1"/>
</dbReference>
<dbReference type="PROSITE" id="PS51278">
    <property type="entry name" value="GATASE_TYPE_2"/>
    <property type="match status" value="1"/>
</dbReference>
<dbReference type="PROSITE" id="PS51464">
    <property type="entry name" value="SIS"/>
    <property type="match status" value="2"/>
</dbReference>
<gene>
    <name evidence="1" type="primary">glmS</name>
    <name type="ordered locus">FTT_0388</name>
</gene>
<evidence type="ECO:0000255" key="1">
    <source>
        <dbReference type="HAMAP-Rule" id="MF_00164"/>
    </source>
</evidence>
<evidence type="ECO:0007829" key="2">
    <source>
        <dbReference type="PDB" id="3TBF"/>
    </source>
</evidence>
<reference key="1">
    <citation type="journal article" date="2005" name="Nat. Genet.">
        <title>The complete genome sequence of Francisella tularensis, the causative agent of tularemia.</title>
        <authorList>
            <person name="Larsson P."/>
            <person name="Oyston P.C.F."/>
            <person name="Chain P."/>
            <person name="Chu M.C."/>
            <person name="Duffield M."/>
            <person name="Fuxelius H.-H."/>
            <person name="Garcia E."/>
            <person name="Haelltorp G."/>
            <person name="Johansson D."/>
            <person name="Isherwood K.E."/>
            <person name="Karp P.D."/>
            <person name="Larsson E."/>
            <person name="Liu Y."/>
            <person name="Michell S."/>
            <person name="Prior J."/>
            <person name="Prior R."/>
            <person name="Malfatti S."/>
            <person name="Sjoestedt A."/>
            <person name="Svensson K."/>
            <person name="Thompson N."/>
            <person name="Vergez L."/>
            <person name="Wagg J.K."/>
            <person name="Wren B.W."/>
            <person name="Lindler L.E."/>
            <person name="Andersson S.G.E."/>
            <person name="Forsman M."/>
            <person name="Titball R.W."/>
        </authorList>
    </citation>
    <scope>NUCLEOTIDE SEQUENCE [LARGE SCALE GENOMIC DNA]</scope>
    <source>
        <strain>SCHU S4 / Schu 4</strain>
    </source>
</reference>
<feature type="initiator methionine" description="Removed" evidence="1">
    <location>
        <position position="1"/>
    </location>
</feature>
<feature type="chain" id="PRO_0000135332" description="Glutamine--fructose-6-phosphate aminotransferase [isomerizing]">
    <location>
        <begin position="2"/>
        <end position="612"/>
    </location>
</feature>
<feature type="domain" description="Glutamine amidotransferase type-2" evidence="1">
    <location>
        <begin position="2"/>
        <end position="219"/>
    </location>
</feature>
<feature type="domain" description="SIS 1" evidence="1">
    <location>
        <begin position="287"/>
        <end position="427"/>
    </location>
</feature>
<feature type="domain" description="SIS 2" evidence="1">
    <location>
        <begin position="460"/>
        <end position="602"/>
    </location>
</feature>
<feature type="active site" description="Nucleophile; for GATase activity" evidence="1">
    <location>
        <position position="2"/>
    </location>
</feature>
<feature type="active site" description="For Fru-6P isomerization activity" evidence="1">
    <location>
        <position position="607"/>
    </location>
</feature>
<feature type="helix" evidence="2">
    <location>
        <begin position="253"/>
        <end position="259"/>
    </location>
</feature>
<feature type="helix" evidence="2">
    <location>
        <begin position="261"/>
        <end position="270"/>
    </location>
</feature>
<feature type="helix" evidence="2">
    <location>
        <begin position="280"/>
        <end position="282"/>
    </location>
</feature>
<feature type="helix" evidence="2">
    <location>
        <begin position="287"/>
        <end position="292"/>
    </location>
</feature>
<feature type="strand" evidence="2">
    <location>
        <begin position="296"/>
        <end position="301"/>
    </location>
</feature>
<feature type="helix" evidence="2">
    <location>
        <begin position="303"/>
        <end position="318"/>
    </location>
</feature>
<feature type="strand" evidence="2">
    <location>
        <begin position="324"/>
        <end position="328"/>
    </location>
</feature>
<feature type="helix" evidence="2">
    <location>
        <begin position="329"/>
        <end position="332"/>
    </location>
</feature>
<feature type="strand" evidence="2">
    <location>
        <begin position="343"/>
        <end position="352"/>
    </location>
</feature>
<feature type="helix" evidence="2">
    <location>
        <begin position="355"/>
        <end position="364"/>
    </location>
</feature>
<feature type="turn" evidence="2">
    <location>
        <begin position="365"/>
        <end position="368"/>
    </location>
</feature>
<feature type="strand" evidence="2">
    <location>
        <begin position="369"/>
        <end position="381"/>
    </location>
</feature>
<feature type="helix" evidence="2">
    <location>
        <begin position="382"/>
        <end position="386"/>
    </location>
</feature>
<feature type="strand" evidence="2">
    <location>
        <begin position="387"/>
        <end position="392"/>
    </location>
</feature>
<feature type="strand" evidence="2">
    <location>
        <begin position="400"/>
        <end position="402"/>
    </location>
</feature>
<feature type="helix" evidence="2">
    <location>
        <begin position="405"/>
        <end position="424"/>
    </location>
</feature>
<feature type="helix" evidence="2">
    <location>
        <begin position="430"/>
        <end position="441"/>
    </location>
</feature>
<feature type="helix" evidence="2">
    <location>
        <begin position="443"/>
        <end position="451"/>
    </location>
</feature>
<feature type="helix" evidence="2">
    <location>
        <begin position="454"/>
        <end position="461"/>
    </location>
</feature>
<feature type="helix" evidence="2">
    <location>
        <begin position="462"/>
        <end position="464"/>
    </location>
</feature>
<feature type="strand" evidence="2">
    <location>
        <begin position="469"/>
        <end position="474"/>
    </location>
</feature>
<feature type="helix" evidence="2">
    <location>
        <begin position="478"/>
        <end position="493"/>
    </location>
</feature>
<feature type="strand" evidence="2">
    <location>
        <begin position="496"/>
        <end position="501"/>
    </location>
</feature>
<feature type="helix" evidence="2">
    <location>
        <begin position="502"/>
        <end position="504"/>
    </location>
</feature>
<feature type="turn" evidence="2">
    <location>
        <begin position="505"/>
        <end position="512"/>
    </location>
</feature>
<feature type="strand" evidence="2">
    <location>
        <begin position="518"/>
        <end position="523"/>
    </location>
</feature>
<feature type="helix" evidence="2">
    <location>
        <begin position="529"/>
        <end position="541"/>
    </location>
</feature>
<feature type="strand" evidence="2">
    <location>
        <begin position="545"/>
        <end position="551"/>
    </location>
</feature>
<feature type="helix" evidence="2">
    <location>
        <begin position="552"/>
        <end position="557"/>
    </location>
</feature>
<feature type="strand" evidence="2">
    <location>
        <begin position="564"/>
        <end position="568"/>
    </location>
</feature>
<feature type="helix" evidence="2">
    <location>
        <begin position="575"/>
        <end position="595"/>
    </location>
</feature>
<accession>Q5NHQ9</accession>
<proteinExistence type="evidence at protein level"/>
<comment type="function">
    <text evidence="1">Catalyzes the first step in hexosamine metabolism, converting fructose-6P into glucosamine-6P using glutamine as a nitrogen source.</text>
</comment>
<comment type="catalytic activity">
    <reaction evidence="1">
        <text>D-fructose 6-phosphate + L-glutamine = D-glucosamine 6-phosphate + L-glutamate</text>
        <dbReference type="Rhea" id="RHEA:13237"/>
        <dbReference type="ChEBI" id="CHEBI:29985"/>
        <dbReference type="ChEBI" id="CHEBI:58359"/>
        <dbReference type="ChEBI" id="CHEBI:58725"/>
        <dbReference type="ChEBI" id="CHEBI:61527"/>
        <dbReference type="EC" id="2.6.1.16"/>
    </reaction>
</comment>
<comment type="subunit">
    <text evidence="1">Homodimer.</text>
</comment>
<comment type="subcellular location">
    <subcellularLocation>
        <location evidence="1">Cytoplasm</location>
    </subcellularLocation>
</comment>
<name>GLMS_FRATT</name>
<sequence>MCGIVGANSTRNVTNILIEGLKKLEYRGYDSAGLAIIDDKNNIDICKEVGKVIELEKSVHNLANFKGDIGIAHTRWATHGKPSKNNSHPHASESFCIVHNGVIENFAELKKVLINDGYKFKSDTDTEVIAHLLQKEWRDNFSIVDNIKYIMAMLKGAYAVAIISQKFSDKIVAVRSGSPLVIGVGIDENFISSDALSLLPVTNKFSYLDEGDIAIISKDNVEVFDNNGAAKNLEVEEYNYSSSSASKDGYKHYMLKEIYEQPEAVSNTILASLADGEISLDSFDKRAKELFEKTKHICIVACGTSYNAGMTAKYWIEKYAKVPCSVEIASEIRYRDNVVVDGSLFVSISQSGETADTLESLRKSKKQNYVGSMCICNVPNSSLVRESDIAFMTKAGVEIGVASTKAFTTQLVALAIFTLVIAKLKNSLTDQQIAKYTEELKNIRALVMGALKLDTEIDQISEYFSDKEHTIFLGRGLYYPIAIEGALKLKEISYIHAEAYPSGELKHGPLALVDKNMPIVAVVPNDELLDKTLSNLQEVHARGGKLILFVDKAVKERVNFDNSIVLELDAGHDFSAPVVFTIPLQLLSYHVAIIKGTDVDQPRNLAKSVTVE</sequence>